<feature type="chain" id="PRO_0000127983" description="Uncharacterized protein AF_1295">
    <location>
        <begin position="1"/>
        <end position="137"/>
    </location>
</feature>
<sequence>MQLTIKWLHLSVDGETCPRCSETGKELLKAVNTLKEFLSPLGFEVVFEEVELTPEDFSRDPFKSNEVWINGRLLEDWIGAKVTQTPCCDVCGDQECRALEVDQQLQEVVKADLVVKAALMAVAELKTSCCSETSCCD</sequence>
<name>Y1295_ARCFU</name>
<reference key="1">
    <citation type="journal article" date="1997" name="Nature">
        <title>The complete genome sequence of the hyperthermophilic, sulphate-reducing archaeon Archaeoglobus fulgidus.</title>
        <authorList>
            <person name="Klenk H.-P."/>
            <person name="Clayton R.A."/>
            <person name="Tomb J.-F."/>
            <person name="White O."/>
            <person name="Nelson K.E."/>
            <person name="Ketchum K.A."/>
            <person name="Dodson R.J."/>
            <person name="Gwinn M.L."/>
            <person name="Hickey E.K."/>
            <person name="Peterson J.D."/>
            <person name="Richardson D.L."/>
            <person name="Kerlavage A.R."/>
            <person name="Graham D.E."/>
            <person name="Kyrpides N.C."/>
            <person name="Fleischmann R.D."/>
            <person name="Quackenbush J."/>
            <person name="Lee N.H."/>
            <person name="Sutton G.G."/>
            <person name="Gill S.R."/>
            <person name="Kirkness E.F."/>
            <person name="Dougherty B.A."/>
            <person name="McKenney K."/>
            <person name="Adams M.D."/>
            <person name="Loftus B.J."/>
            <person name="Peterson S.N."/>
            <person name="Reich C.I."/>
            <person name="McNeil L.K."/>
            <person name="Badger J.H."/>
            <person name="Glodek A."/>
            <person name="Zhou L."/>
            <person name="Overbeek R."/>
            <person name="Gocayne J.D."/>
            <person name="Weidman J.F."/>
            <person name="McDonald L.A."/>
            <person name="Utterback T.R."/>
            <person name="Cotton M.D."/>
            <person name="Spriggs T."/>
            <person name="Artiach P."/>
            <person name="Kaine B.P."/>
            <person name="Sykes S.M."/>
            <person name="Sadow P.W."/>
            <person name="D'Andrea K.P."/>
            <person name="Bowman C."/>
            <person name="Fujii C."/>
            <person name="Garland S.A."/>
            <person name="Mason T.M."/>
            <person name="Olsen G.J."/>
            <person name="Fraser C.M."/>
            <person name="Smith H.O."/>
            <person name="Woese C.R."/>
            <person name="Venter J.C."/>
        </authorList>
    </citation>
    <scope>NUCLEOTIDE SEQUENCE [LARGE SCALE GENOMIC DNA]</scope>
    <source>
        <strain>ATCC 49558 / DSM 4304 / JCM 9628 / NBRC 100126 / VC-16</strain>
    </source>
</reference>
<keyword id="KW-1185">Reference proteome</keyword>
<dbReference type="EMBL" id="AE000782">
    <property type="protein sequence ID" value="AAB89951.1"/>
    <property type="molecule type" value="Genomic_DNA"/>
</dbReference>
<dbReference type="PIR" id="F69411">
    <property type="entry name" value="F69411"/>
</dbReference>
<dbReference type="RefSeq" id="WP_010878791.1">
    <property type="nucleotide sequence ID" value="NC_000917.1"/>
</dbReference>
<dbReference type="SMR" id="O28974"/>
<dbReference type="STRING" id="224325.AF_1295"/>
<dbReference type="PaxDb" id="224325-AF_1295"/>
<dbReference type="DNASU" id="1484521"/>
<dbReference type="EnsemblBacteria" id="AAB89951">
    <property type="protein sequence ID" value="AAB89951"/>
    <property type="gene ID" value="AF_1295"/>
</dbReference>
<dbReference type="KEGG" id="afu:AF_1295"/>
<dbReference type="eggNOG" id="arCOG06127">
    <property type="taxonomic scope" value="Archaea"/>
</dbReference>
<dbReference type="HOGENOM" id="CLU_155898_0_0_2"/>
<dbReference type="OrthoDB" id="383908at2157"/>
<dbReference type="Proteomes" id="UP000002199">
    <property type="component" value="Chromosome"/>
</dbReference>
<dbReference type="InterPro" id="IPR021219">
    <property type="entry name" value="DUF2703"/>
</dbReference>
<dbReference type="Pfam" id="PF10865">
    <property type="entry name" value="DUF2703"/>
    <property type="match status" value="1"/>
</dbReference>
<protein>
    <recommendedName>
        <fullName>Uncharacterized protein AF_1295</fullName>
    </recommendedName>
</protein>
<organism>
    <name type="scientific">Archaeoglobus fulgidus (strain ATCC 49558 / DSM 4304 / JCM 9628 / NBRC 100126 / VC-16)</name>
    <dbReference type="NCBI Taxonomy" id="224325"/>
    <lineage>
        <taxon>Archaea</taxon>
        <taxon>Methanobacteriati</taxon>
        <taxon>Methanobacteriota</taxon>
        <taxon>Archaeoglobi</taxon>
        <taxon>Archaeoglobales</taxon>
        <taxon>Archaeoglobaceae</taxon>
        <taxon>Archaeoglobus</taxon>
    </lineage>
</organism>
<accession>O28974</accession>
<gene>
    <name type="ordered locus">AF_1295</name>
</gene>
<proteinExistence type="predicted"/>